<organism>
    <name type="scientific">Zymomonas mobilis subsp. mobilis (strain ATCC 31821 / ZM4 / CP4)</name>
    <dbReference type="NCBI Taxonomy" id="264203"/>
    <lineage>
        <taxon>Bacteria</taxon>
        <taxon>Pseudomonadati</taxon>
        <taxon>Pseudomonadota</taxon>
        <taxon>Alphaproteobacteria</taxon>
        <taxon>Sphingomonadales</taxon>
        <taxon>Zymomonadaceae</taxon>
        <taxon>Zymomonas</taxon>
    </lineage>
</organism>
<dbReference type="EC" id="1.1.1.49" evidence="1"/>
<dbReference type="EMBL" id="M60615">
    <property type="protein sequence ID" value="AAA27692.1"/>
    <property type="molecule type" value="Genomic_DNA"/>
</dbReference>
<dbReference type="EMBL" id="AF313764">
    <property type="protein sequence ID" value="AAG29865.1"/>
    <property type="molecule type" value="Genomic_DNA"/>
</dbReference>
<dbReference type="EMBL" id="AE008692">
    <property type="protein sequence ID" value="AAV88991.1"/>
    <property type="molecule type" value="Genomic_DNA"/>
</dbReference>
<dbReference type="PIR" id="B37855">
    <property type="entry name" value="B37855"/>
</dbReference>
<dbReference type="RefSeq" id="WP_011240288.1">
    <property type="nucleotide sequence ID" value="NZ_CP035711.1"/>
</dbReference>
<dbReference type="PDB" id="7XHL">
    <property type="method" value="X-ray"/>
    <property type="resolution" value="3.25 A"/>
    <property type="chains" value="A/B/C/D/E/F/G/H=1-485"/>
</dbReference>
<dbReference type="PDB" id="7XHP">
    <property type="method" value="X-ray"/>
    <property type="resolution" value="2.78 A"/>
    <property type="chains" value="A/B/C/D/E/F/G/H=1-485"/>
</dbReference>
<dbReference type="PDBsum" id="7XHL"/>
<dbReference type="PDBsum" id="7XHP"/>
<dbReference type="SMR" id="P21907"/>
<dbReference type="STRING" id="264203.ZMO0367"/>
<dbReference type="GeneID" id="79904429"/>
<dbReference type="KEGG" id="zmo:ZMO0367"/>
<dbReference type="eggNOG" id="COG0364">
    <property type="taxonomic scope" value="Bacteria"/>
</dbReference>
<dbReference type="HOGENOM" id="CLU_013524_5_0_5"/>
<dbReference type="UniPathway" id="UPA00115">
    <property type="reaction ID" value="UER00408"/>
</dbReference>
<dbReference type="Proteomes" id="UP000001173">
    <property type="component" value="Chromosome"/>
</dbReference>
<dbReference type="GO" id="GO:0005829">
    <property type="term" value="C:cytosol"/>
    <property type="evidence" value="ECO:0007669"/>
    <property type="project" value="TreeGrafter"/>
</dbReference>
<dbReference type="GO" id="GO:0004345">
    <property type="term" value="F:glucose-6-phosphate dehydrogenase activity"/>
    <property type="evidence" value="ECO:0007669"/>
    <property type="project" value="UniProtKB-UniRule"/>
</dbReference>
<dbReference type="GO" id="GO:0050661">
    <property type="term" value="F:NADP binding"/>
    <property type="evidence" value="ECO:0007669"/>
    <property type="project" value="UniProtKB-UniRule"/>
</dbReference>
<dbReference type="GO" id="GO:0006006">
    <property type="term" value="P:glucose metabolic process"/>
    <property type="evidence" value="ECO:0007669"/>
    <property type="project" value="UniProtKB-KW"/>
</dbReference>
<dbReference type="GO" id="GO:0009051">
    <property type="term" value="P:pentose-phosphate shunt, oxidative branch"/>
    <property type="evidence" value="ECO:0007669"/>
    <property type="project" value="TreeGrafter"/>
</dbReference>
<dbReference type="Gene3D" id="3.30.360.10">
    <property type="entry name" value="Dihydrodipicolinate Reductase, domain 2"/>
    <property type="match status" value="1"/>
</dbReference>
<dbReference type="Gene3D" id="3.40.50.720">
    <property type="entry name" value="NAD(P)-binding Rossmann-like Domain"/>
    <property type="match status" value="1"/>
</dbReference>
<dbReference type="HAMAP" id="MF_00966">
    <property type="entry name" value="G6PD"/>
    <property type="match status" value="1"/>
</dbReference>
<dbReference type="InterPro" id="IPR001282">
    <property type="entry name" value="G6P_DH"/>
</dbReference>
<dbReference type="InterPro" id="IPR019796">
    <property type="entry name" value="G6P_DH_AS"/>
</dbReference>
<dbReference type="InterPro" id="IPR022675">
    <property type="entry name" value="G6P_DH_C"/>
</dbReference>
<dbReference type="InterPro" id="IPR022674">
    <property type="entry name" value="G6P_DH_NAD-bd"/>
</dbReference>
<dbReference type="InterPro" id="IPR036291">
    <property type="entry name" value="NAD(P)-bd_dom_sf"/>
</dbReference>
<dbReference type="NCBIfam" id="TIGR00871">
    <property type="entry name" value="zwf"/>
    <property type="match status" value="1"/>
</dbReference>
<dbReference type="PANTHER" id="PTHR23429:SF0">
    <property type="entry name" value="GLUCOSE-6-PHOSPHATE 1-DEHYDROGENASE"/>
    <property type="match status" value="1"/>
</dbReference>
<dbReference type="PANTHER" id="PTHR23429">
    <property type="entry name" value="GLUCOSE-6-PHOSPHATE 1-DEHYDROGENASE G6PD"/>
    <property type="match status" value="1"/>
</dbReference>
<dbReference type="Pfam" id="PF02781">
    <property type="entry name" value="G6PD_C"/>
    <property type="match status" value="1"/>
</dbReference>
<dbReference type="Pfam" id="PF00479">
    <property type="entry name" value="G6PD_N"/>
    <property type="match status" value="1"/>
</dbReference>
<dbReference type="PIRSF" id="PIRSF000110">
    <property type="entry name" value="G6PD"/>
    <property type="match status" value="1"/>
</dbReference>
<dbReference type="PRINTS" id="PR00079">
    <property type="entry name" value="G6PDHDRGNASE"/>
</dbReference>
<dbReference type="SUPFAM" id="SSF55347">
    <property type="entry name" value="Glyceraldehyde-3-phosphate dehydrogenase-like, C-terminal domain"/>
    <property type="match status" value="1"/>
</dbReference>
<dbReference type="SUPFAM" id="SSF51735">
    <property type="entry name" value="NAD(P)-binding Rossmann-fold domains"/>
    <property type="match status" value="1"/>
</dbReference>
<dbReference type="PROSITE" id="PS00069">
    <property type="entry name" value="G6P_DEHYDROGENASE"/>
    <property type="match status" value="1"/>
</dbReference>
<accession>P21907</accession>
<accession>Q5NQL3</accession>
<comment type="function">
    <text evidence="1">Catalyzes the oxidation of glucose 6-phosphate to 6-phosphogluconolactone.</text>
</comment>
<comment type="catalytic activity">
    <reaction evidence="1">
        <text>D-glucose 6-phosphate + NADP(+) = 6-phospho-D-glucono-1,5-lactone + NADPH + H(+)</text>
        <dbReference type="Rhea" id="RHEA:15841"/>
        <dbReference type="ChEBI" id="CHEBI:15378"/>
        <dbReference type="ChEBI" id="CHEBI:57783"/>
        <dbReference type="ChEBI" id="CHEBI:57955"/>
        <dbReference type="ChEBI" id="CHEBI:58349"/>
        <dbReference type="ChEBI" id="CHEBI:61548"/>
        <dbReference type="EC" id="1.1.1.49"/>
    </reaction>
</comment>
<comment type="pathway">
    <text evidence="1">Carbohydrate degradation; pentose phosphate pathway; D-ribulose 5-phosphate from D-glucose 6-phosphate (oxidative stage): step 1/3.</text>
</comment>
<comment type="similarity">
    <text evidence="1">Belongs to the glucose-6-phosphate dehydrogenase family.</text>
</comment>
<proteinExistence type="evidence at protein level"/>
<feature type="chain" id="PRO_0000068138" description="Glucose-6-phosphate 1-dehydrogenase">
    <location>
        <begin position="1"/>
        <end position="485"/>
    </location>
</feature>
<feature type="active site" description="Proton acceptor" evidence="1">
    <location>
        <position position="236"/>
    </location>
</feature>
<feature type="binding site" evidence="1">
    <location>
        <position position="46"/>
    </location>
    <ligand>
        <name>NADP(+)</name>
        <dbReference type="ChEBI" id="CHEBI:58349"/>
    </ligand>
</feature>
<feature type="binding site" evidence="1">
    <location>
        <begin position="89"/>
        <end position="90"/>
    </location>
    <ligand>
        <name>NADP(+)</name>
        <dbReference type="ChEBI" id="CHEBI:58349"/>
    </ligand>
</feature>
<feature type="binding site" evidence="1">
    <location>
        <position position="144"/>
    </location>
    <ligand>
        <name>NADP(+)</name>
        <dbReference type="ChEBI" id="CHEBI:58349"/>
    </ligand>
</feature>
<feature type="binding site" evidence="1">
    <location>
        <position position="174"/>
    </location>
    <ligand>
        <name>substrate</name>
    </ligand>
</feature>
<feature type="binding site" evidence="1">
    <location>
        <position position="178"/>
    </location>
    <ligand>
        <name>substrate</name>
    </ligand>
</feature>
<feature type="binding site" evidence="1">
    <location>
        <position position="212"/>
    </location>
    <ligand>
        <name>substrate</name>
    </ligand>
</feature>
<feature type="binding site" evidence="1">
    <location>
        <position position="231"/>
    </location>
    <ligand>
        <name>substrate</name>
    </ligand>
</feature>
<feature type="binding site" evidence="1">
    <location>
        <position position="334"/>
    </location>
    <ligand>
        <name>substrate</name>
    </ligand>
</feature>
<feature type="strand" evidence="2">
    <location>
        <begin position="7"/>
        <end position="11"/>
    </location>
</feature>
<feature type="strand" evidence="3">
    <location>
        <begin position="12"/>
        <end position="15"/>
    </location>
</feature>
<feature type="helix" evidence="3">
    <location>
        <begin position="16"/>
        <end position="20"/>
    </location>
</feature>
<feature type="turn" evidence="3">
    <location>
        <begin position="21"/>
        <end position="23"/>
    </location>
</feature>
<feature type="helix" evidence="3">
    <location>
        <begin position="24"/>
        <end position="31"/>
    </location>
</feature>
<feature type="strand" evidence="3">
    <location>
        <begin position="32"/>
        <end position="34"/>
    </location>
</feature>
<feature type="strand" evidence="2">
    <location>
        <begin position="40"/>
        <end position="44"/>
    </location>
</feature>
<feature type="strand" evidence="2">
    <location>
        <begin position="46"/>
        <end position="48"/>
    </location>
</feature>
<feature type="helix" evidence="3">
    <location>
        <begin position="51"/>
        <end position="61"/>
    </location>
</feature>
<feature type="turn" evidence="2">
    <location>
        <begin position="68"/>
        <end position="70"/>
    </location>
</feature>
<feature type="helix" evidence="3">
    <location>
        <begin position="73"/>
        <end position="77"/>
    </location>
</feature>
<feature type="turn" evidence="3">
    <location>
        <begin position="80"/>
        <end position="82"/>
    </location>
</feature>
<feature type="strand" evidence="2">
    <location>
        <begin position="83"/>
        <end position="85"/>
    </location>
</feature>
<feature type="helix" evidence="3">
    <location>
        <begin position="94"/>
        <end position="99"/>
    </location>
</feature>
<feature type="strand" evidence="2">
    <location>
        <begin position="100"/>
        <end position="103"/>
    </location>
</feature>
<feature type="turn" evidence="2">
    <location>
        <begin position="106"/>
        <end position="108"/>
    </location>
</feature>
<feature type="strand" evidence="2">
    <location>
        <begin position="110"/>
        <end position="114"/>
    </location>
</feature>
<feature type="helix" evidence="3">
    <location>
        <begin position="121"/>
        <end position="125"/>
    </location>
</feature>
<feature type="helix" evidence="3">
    <location>
        <begin position="127"/>
        <end position="131"/>
    </location>
</feature>
<feature type="helix" evidence="3">
    <location>
        <begin position="150"/>
        <end position="163"/>
    </location>
</feature>
<feature type="turn" evidence="3">
    <location>
        <begin position="166"/>
        <end position="168"/>
    </location>
</feature>
<feature type="strand" evidence="3">
    <location>
        <begin position="170"/>
        <end position="172"/>
    </location>
</feature>
<feature type="turn" evidence="3">
    <location>
        <begin position="174"/>
        <end position="177"/>
    </location>
</feature>
<feature type="helix" evidence="3">
    <location>
        <begin position="179"/>
        <end position="182"/>
    </location>
</feature>
<feature type="helix" evidence="3">
    <location>
        <begin position="184"/>
        <end position="189"/>
    </location>
</feature>
<feature type="strand" evidence="3">
    <location>
        <begin position="192"/>
        <end position="194"/>
    </location>
</feature>
<feature type="helix" evidence="3">
    <location>
        <begin position="195"/>
        <end position="197"/>
    </location>
</feature>
<feature type="strand" evidence="3">
    <location>
        <begin position="199"/>
        <end position="211"/>
    </location>
</feature>
<feature type="turn" evidence="3">
    <location>
        <begin position="220"/>
        <end position="225"/>
    </location>
</feature>
<feature type="helix" evidence="3">
    <location>
        <begin position="228"/>
        <end position="231"/>
    </location>
</feature>
<feature type="turn" evidence="3">
    <location>
        <begin position="232"/>
        <end position="235"/>
    </location>
</feature>
<feature type="helix" evidence="3">
    <location>
        <begin position="236"/>
        <end position="245"/>
    </location>
</feature>
<feature type="helix" evidence="3">
    <location>
        <begin position="254"/>
        <end position="266"/>
    </location>
</feature>
<feature type="helix" evidence="3">
    <location>
        <begin position="273"/>
        <end position="279"/>
    </location>
</feature>
<feature type="strand" evidence="3">
    <location>
        <begin position="280"/>
        <end position="285"/>
    </location>
</feature>
<feature type="strand" evidence="2">
    <location>
        <begin position="287"/>
        <end position="290"/>
    </location>
</feature>
<feature type="strand" evidence="2">
    <location>
        <begin position="293"/>
        <end position="295"/>
    </location>
</feature>
<feature type="helix" evidence="3">
    <location>
        <begin position="298"/>
        <end position="302"/>
    </location>
</feature>
<feature type="strand" evidence="3">
    <location>
        <begin position="310"/>
        <end position="318"/>
    </location>
</feature>
<feature type="strand" evidence="3">
    <location>
        <begin position="320"/>
        <end position="323"/>
    </location>
</feature>
<feature type="strand" evidence="3">
    <location>
        <begin position="327"/>
        <end position="335"/>
    </location>
</feature>
<feature type="strand" evidence="3">
    <location>
        <begin position="341"/>
        <end position="347"/>
    </location>
</feature>
<feature type="turn" evidence="3">
    <location>
        <begin position="354"/>
        <end position="358"/>
    </location>
</feature>
<feature type="strand" evidence="3">
    <location>
        <begin position="366"/>
        <end position="374"/>
    </location>
</feature>
<feature type="strand" evidence="3">
    <location>
        <begin position="376"/>
        <end position="384"/>
    </location>
</feature>
<feature type="strand" evidence="3">
    <location>
        <begin position="390"/>
        <end position="392"/>
    </location>
</feature>
<feature type="strand" evidence="3">
    <location>
        <begin position="395"/>
        <end position="403"/>
    </location>
</feature>
<feature type="helix" evidence="3">
    <location>
        <begin position="404"/>
        <end position="407"/>
    </location>
</feature>
<feature type="turn" evidence="3">
    <location>
        <begin position="408"/>
        <end position="410"/>
    </location>
</feature>
<feature type="helix" evidence="3">
    <location>
        <begin position="416"/>
        <end position="425"/>
    </location>
</feature>
<feature type="strand" evidence="3">
    <location>
        <begin position="426"/>
        <end position="428"/>
    </location>
</feature>
<feature type="strand" evidence="3">
    <location>
        <begin position="430"/>
        <end position="433"/>
    </location>
</feature>
<feature type="helix" evidence="3">
    <location>
        <begin position="435"/>
        <end position="454"/>
    </location>
</feature>
<feature type="strand" evidence="3">
    <location>
        <begin position="460"/>
        <end position="462"/>
    </location>
</feature>
<feature type="strand" evidence="2">
    <location>
        <begin position="466"/>
        <end position="468"/>
    </location>
</feature>
<feature type="helix" evidence="3">
    <location>
        <begin position="471"/>
        <end position="477"/>
    </location>
</feature>
<feature type="turn" evidence="3">
    <location>
        <begin position="478"/>
        <end position="480"/>
    </location>
</feature>
<keyword id="KW-0002">3D-structure</keyword>
<keyword id="KW-0119">Carbohydrate metabolism</keyword>
<keyword id="KW-0313">Glucose metabolism</keyword>
<keyword id="KW-0521">NADP</keyword>
<keyword id="KW-0560">Oxidoreductase</keyword>
<keyword id="KW-1185">Reference proteome</keyword>
<sequence length="485" mass="53859">MTNTVSTMILFGSTGDLSQRMLLPSLYGLDADGLLADDLRIVCTSRSEYDTDGFRDFAEKALDRFVASDRLNDDAKAKFLNKLFYATVDITDPTQFGKLADLCGPVEKGIAIYLSTAPSLFEGAIAGLKQAGLAGPTSRLALEKPLGQDLASSDHINDAVLKVFSEKQVYRIDHYLGKETVQNLLTLRFGNALFEPLWNSKGIDHVQISVAETVGLEGRIGYFDGSGSLRDMVQSHILQLVALVAMEPPAHMEANAVRDEKVKVFRALRPINNDTVFTHTVTGQYGAGVSGGKEVAGYIDELGQPSDTETFVAIKAHVDNWRWQGVPFYIRTGKRLPARRSEIVVQFKPVPHSIFSSSGGILQPNKLRIVLQPDETIQISMMVKEPGLDRNGAHMREVWLDLSLTDVFKDRKRRIAYERLMLDLIEGDATLFVRRDEVEAQWVWIDGIREGWKANSMKPKTYVSGTWGPSTAIALAERDGVTWYD</sequence>
<protein>
    <recommendedName>
        <fullName evidence="1">Glucose-6-phosphate 1-dehydrogenase</fullName>
        <shortName evidence="1">G6PD</shortName>
        <ecNumber evidence="1">1.1.1.49</ecNumber>
    </recommendedName>
</protein>
<gene>
    <name evidence="1" type="primary">zwf</name>
    <name type="ordered locus">ZMO0367</name>
</gene>
<name>G6PD_ZYMMO</name>
<evidence type="ECO:0000255" key="1">
    <source>
        <dbReference type="HAMAP-Rule" id="MF_00966"/>
    </source>
</evidence>
<evidence type="ECO:0007829" key="2">
    <source>
        <dbReference type="PDB" id="7XHL"/>
    </source>
</evidence>
<evidence type="ECO:0007829" key="3">
    <source>
        <dbReference type="PDB" id="7XHP"/>
    </source>
</evidence>
<reference key="1">
    <citation type="journal article" date="1990" name="J. Bacteriol.">
        <title>Sequence and genetic organization of a Zymomonas mobilis gene cluster that encodes several enzymes of glucose metabolism.</title>
        <authorList>
            <person name="Barnell W.O."/>
            <person name="Yi K.C."/>
            <person name="Conway T."/>
        </authorList>
    </citation>
    <scope>NUCLEOTIDE SEQUENCE [GENOMIC DNA]</scope>
    <source>
        <strain>ATCC 31821 / ZM4 / CP4</strain>
    </source>
</reference>
<reference key="2">
    <citation type="submission" date="2000-10" db="EMBL/GenBank/DDBJ databases">
        <authorList>
            <person name="Ahn J.Y."/>
            <person name="Kang H.S."/>
        </authorList>
    </citation>
    <scope>NUCLEOTIDE SEQUENCE [GENOMIC DNA]</scope>
    <source>
        <strain>ATCC 31821 / ZM4 / CP4</strain>
    </source>
</reference>
<reference key="3">
    <citation type="journal article" date="2005" name="Nat. Biotechnol.">
        <title>The genome sequence of the ethanologenic bacterium Zymomonas mobilis ZM4.</title>
        <authorList>
            <person name="Seo J.-S."/>
            <person name="Chong H."/>
            <person name="Park H.S."/>
            <person name="Yoon K.-O."/>
            <person name="Jung C."/>
            <person name="Kim J.J."/>
            <person name="Hong J.H."/>
            <person name="Kim H."/>
            <person name="Kim J.-H."/>
            <person name="Kil J.-I."/>
            <person name="Park C.J."/>
            <person name="Oh H.-M."/>
            <person name="Lee J.-S."/>
            <person name="Jin S.-J."/>
            <person name="Um H.-W."/>
            <person name="Lee H.-J."/>
            <person name="Oh S.-J."/>
            <person name="Kim J.Y."/>
            <person name="Kang H.L."/>
            <person name="Lee S.Y."/>
            <person name="Lee K.J."/>
            <person name="Kang H.S."/>
        </authorList>
    </citation>
    <scope>NUCLEOTIDE SEQUENCE [LARGE SCALE GENOMIC DNA]</scope>
    <source>
        <strain>ATCC 31821 / ZM4 / CP4</strain>
    </source>
</reference>